<comment type="function">
    <text evidence="1">Allows the formation of correctly charged Gln-tRNA(Gln) through the transamidation of misacylated Glu-tRNA(Gln) in chloroplasts and mitochondria. The reaction takes place in the presence of glutamine and ATP through an activated gamma-phospho-Glu-tRNA(Gln).</text>
</comment>
<comment type="catalytic activity">
    <reaction evidence="1">
        <text>L-glutamyl-tRNA(Gln) + L-glutamine + ATP + H2O = L-glutaminyl-tRNA(Gln) + L-glutamate + ADP + phosphate + H(+)</text>
        <dbReference type="Rhea" id="RHEA:17521"/>
        <dbReference type="Rhea" id="RHEA-COMP:9681"/>
        <dbReference type="Rhea" id="RHEA-COMP:9684"/>
        <dbReference type="ChEBI" id="CHEBI:15377"/>
        <dbReference type="ChEBI" id="CHEBI:15378"/>
        <dbReference type="ChEBI" id="CHEBI:29985"/>
        <dbReference type="ChEBI" id="CHEBI:30616"/>
        <dbReference type="ChEBI" id="CHEBI:43474"/>
        <dbReference type="ChEBI" id="CHEBI:58359"/>
        <dbReference type="ChEBI" id="CHEBI:78520"/>
        <dbReference type="ChEBI" id="CHEBI:78521"/>
        <dbReference type="ChEBI" id="CHEBI:456216"/>
        <dbReference type="EC" id="6.3.5.7"/>
    </reaction>
</comment>
<comment type="subunit">
    <text evidence="1">Subunit of the heterotrimeric GatCAB amidotransferase (AdT) complex, composed of A, B and C subunits.</text>
</comment>
<comment type="subcellular location">
    <subcellularLocation>
        <location evidence="1">Mitochondrion</location>
    </subcellularLocation>
    <subcellularLocation>
        <location evidence="1">Plastid</location>
        <location evidence="1">Chloroplast stroma</location>
    </subcellularLocation>
</comment>
<comment type="miscellaneous">
    <text evidence="1">This protein may be expected to contain an N-terminal transit peptide but none has been predicted.</text>
</comment>
<comment type="similarity">
    <text evidence="1">Belongs to the amidase family. GatA subfamily.</text>
</comment>
<comment type="sequence caution" evidence="2">
    <conflict type="erroneous gene model prediction">
        <sequence resource="EMBL-CDS" id="BAF15963"/>
    </conflict>
</comment>
<comment type="sequence caution" evidence="2">
    <conflict type="miscellaneous discrepancy">
        <sequence resource="EMBL-CDS" id="CAD41903"/>
    </conflict>
    <text>Sequencing errors.</text>
</comment>
<comment type="sequence caution" evidence="2">
    <conflict type="miscellaneous discrepancy">
        <sequence resource="EMBL-CDS" id="CAE05977"/>
    </conflict>
    <text>Sequencing errors.</text>
</comment>
<evidence type="ECO:0000255" key="1">
    <source>
        <dbReference type="HAMAP-Rule" id="MF_03150"/>
    </source>
</evidence>
<evidence type="ECO:0000305" key="2"/>
<organism>
    <name type="scientific">Oryza sativa subsp. japonica</name>
    <name type="common">Rice</name>
    <dbReference type="NCBI Taxonomy" id="39947"/>
    <lineage>
        <taxon>Eukaryota</taxon>
        <taxon>Viridiplantae</taxon>
        <taxon>Streptophyta</taxon>
        <taxon>Embryophyta</taxon>
        <taxon>Tracheophyta</taxon>
        <taxon>Spermatophyta</taxon>
        <taxon>Magnoliopsida</taxon>
        <taxon>Liliopsida</taxon>
        <taxon>Poales</taxon>
        <taxon>Poaceae</taxon>
        <taxon>BOP clade</taxon>
        <taxon>Oryzoideae</taxon>
        <taxon>Oryzeae</taxon>
        <taxon>Oryzinae</taxon>
        <taxon>Oryza</taxon>
        <taxon>Oryza sativa</taxon>
    </lineage>
</organism>
<name>GATA_ORYSJ</name>
<accession>Q7X8Z8</accession>
<accession>A3AXY6</accession>
<accession>Q0J9M4</accession>
<feature type="chain" id="PRO_0000413342" description="Glutamyl-tRNA(Gln) amidotransferase subunit A, chloroplastic/mitochondrial">
    <location>
        <begin position="1"/>
        <end position="543"/>
    </location>
</feature>
<feature type="active site" description="Charge relay system" evidence="1">
    <location>
        <position position="123"/>
    </location>
</feature>
<feature type="active site" description="Charge relay system" evidence="1">
    <location>
        <position position="198"/>
    </location>
</feature>
<feature type="active site" description="Acyl-ester intermediate" evidence="1">
    <location>
        <position position="222"/>
    </location>
</feature>
<sequence length="543" mass="57219">MPPPLQAQRLLLSHRRLPSPHLRCFTAVSSLPSAPAKTVAAAAAHAPSSILSIRESLLSGERTAAEITAEYLSRLRRTEPSVRSFIHVADAAAEREAEELDRRIATEGLDAVGPLAGVLVGVKDNLCTANMPSTGGSRILDGYQPAYDATAVRRLREAGAIVVGKTNLDEFGMGSTTEGSGFQVTTNPWDDSRVPGGSSGGSASAVSARQCVVSLGSDTGGSVRQPASFCGVVGLKPTYGRVSRFGLMAYASSLDVVGCFGSSVVDTATILSVIAGHDKMDSTSSSHDVSDYKSELVPLDLLESKPLNGMRIGIIQETLGEGVETGVISSIKDAASHLEQLGSVVEEVSLPSFSLGLPAYYILASSEASSNLSRYDGIRYGRQVSGDDLNELYGGSRANGLGHEVKMRILMGTYALSAGYYDAYYKRAQQVRTLVKKSFKEALERYDILVSPAAPSAAYKIGEKINDPLAMYAGDTMTVNVNLAGLPALVVPCGFVEGGSAGLPVGLQMIGSPFSEGNLLRIGHIFEQTLQNYSFVPPLLAES</sequence>
<dbReference type="EC" id="6.3.5.7" evidence="1"/>
<dbReference type="EMBL" id="AL606454">
    <property type="protein sequence ID" value="CAD41903.2"/>
    <property type="status" value="ALT_SEQ"/>
    <property type="molecule type" value="Genomic_DNA"/>
</dbReference>
<dbReference type="EMBL" id="AL731607">
    <property type="protein sequence ID" value="CAE05977.2"/>
    <property type="status" value="ALT_SEQ"/>
    <property type="molecule type" value="Genomic_DNA"/>
</dbReference>
<dbReference type="EMBL" id="AP008210">
    <property type="protein sequence ID" value="BAF15963.2"/>
    <property type="status" value="ALT_SEQ"/>
    <property type="molecule type" value="Genomic_DNA"/>
</dbReference>
<dbReference type="EMBL" id="AP014960">
    <property type="status" value="NOT_ANNOTATED_CDS"/>
    <property type="molecule type" value="Genomic_DNA"/>
</dbReference>
<dbReference type="EMBL" id="CM000141">
    <property type="protein sequence ID" value="EAZ32175.1"/>
    <property type="molecule type" value="Genomic_DNA"/>
</dbReference>
<dbReference type="SMR" id="Q7X8Z8"/>
<dbReference type="FunCoup" id="Q7X8Z8">
    <property type="interactions" value="1448"/>
</dbReference>
<dbReference type="STRING" id="39947.Q7X8Z8"/>
<dbReference type="PaxDb" id="39947-Q7X8Z8"/>
<dbReference type="KEGG" id="dosa:Os04g0643200"/>
<dbReference type="eggNOG" id="KOG1211">
    <property type="taxonomic scope" value="Eukaryota"/>
</dbReference>
<dbReference type="HOGENOM" id="CLU_009600_0_3_1"/>
<dbReference type="InParanoid" id="Q7X8Z8"/>
<dbReference type="Proteomes" id="UP000000763">
    <property type="component" value="Chromosome 4"/>
</dbReference>
<dbReference type="Proteomes" id="UP000007752">
    <property type="component" value="Chromosome 4"/>
</dbReference>
<dbReference type="Proteomes" id="UP000059680">
    <property type="component" value="Chromosome 4"/>
</dbReference>
<dbReference type="GO" id="GO:0009570">
    <property type="term" value="C:chloroplast stroma"/>
    <property type="evidence" value="ECO:0007669"/>
    <property type="project" value="UniProtKB-SubCell"/>
</dbReference>
<dbReference type="GO" id="GO:0030956">
    <property type="term" value="C:glutamyl-tRNA(Gln) amidotransferase complex"/>
    <property type="evidence" value="ECO:0007669"/>
    <property type="project" value="UniProtKB-UniRule"/>
</dbReference>
<dbReference type="GO" id="GO:0005739">
    <property type="term" value="C:mitochondrion"/>
    <property type="evidence" value="ECO:0007669"/>
    <property type="project" value="UniProtKB-SubCell"/>
</dbReference>
<dbReference type="GO" id="GO:0005524">
    <property type="term" value="F:ATP binding"/>
    <property type="evidence" value="ECO:0007669"/>
    <property type="project" value="UniProtKB-KW"/>
</dbReference>
<dbReference type="GO" id="GO:0050567">
    <property type="term" value="F:glutaminyl-tRNA synthase (glutamine-hydrolyzing) activity"/>
    <property type="evidence" value="ECO:0000318"/>
    <property type="project" value="GO_Central"/>
</dbReference>
<dbReference type="GO" id="GO:0016811">
    <property type="term" value="F:hydrolase activity, acting on carbon-nitrogen (but not peptide) bonds, in linear amides"/>
    <property type="evidence" value="ECO:0007669"/>
    <property type="project" value="UniProtKB-ARBA"/>
</dbReference>
<dbReference type="GO" id="GO:0070681">
    <property type="term" value="P:glutaminyl-tRNAGln biosynthesis via transamidation"/>
    <property type="evidence" value="ECO:0007669"/>
    <property type="project" value="UniProtKB-UniRule"/>
</dbReference>
<dbReference type="GO" id="GO:0032543">
    <property type="term" value="P:mitochondrial translation"/>
    <property type="evidence" value="ECO:0007669"/>
    <property type="project" value="UniProtKB-UniRule"/>
</dbReference>
<dbReference type="Gene3D" id="3.90.1300.10">
    <property type="entry name" value="Amidase signature (AS) domain"/>
    <property type="match status" value="1"/>
</dbReference>
<dbReference type="HAMAP" id="MF_00120">
    <property type="entry name" value="GatA"/>
    <property type="match status" value="1"/>
</dbReference>
<dbReference type="InterPro" id="IPR000120">
    <property type="entry name" value="Amidase"/>
</dbReference>
<dbReference type="InterPro" id="IPR020556">
    <property type="entry name" value="Amidase_CS"/>
</dbReference>
<dbReference type="InterPro" id="IPR023631">
    <property type="entry name" value="Amidase_dom"/>
</dbReference>
<dbReference type="InterPro" id="IPR036928">
    <property type="entry name" value="AS_sf"/>
</dbReference>
<dbReference type="InterPro" id="IPR004412">
    <property type="entry name" value="GatA"/>
</dbReference>
<dbReference type="NCBIfam" id="TIGR00132">
    <property type="entry name" value="gatA"/>
    <property type="match status" value="1"/>
</dbReference>
<dbReference type="PANTHER" id="PTHR11895:SF7">
    <property type="entry name" value="GLUTAMYL-TRNA(GLN) AMIDOTRANSFERASE SUBUNIT A, MITOCHONDRIAL"/>
    <property type="match status" value="1"/>
</dbReference>
<dbReference type="PANTHER" id="PTHR11895">
    <property type="entry name" value="TRANSAMIDASE"/>
    <property type="match status" value="1"/>
</dbReference>
<dbReference type="Pfam" id="PF01425">
    <property type="entry name" value="Amidase"/>
    <property type="match status" value="1"/>
</dbReference>
<dbReference type="SUPFAM" id="SSF75304">
    <property type="entry name" value="Amidase signature (AS) enzymes"/>
    <property type="match status" value="1"/>
</dbReference>
<dbReference type="PROSITE" id="PS00571">
    <property type="entry name" value="AMIDASES"/>
    <property type="match status" value="1"/>
</dbReference>
<protein>
    <recommendedName>
        <fullName evidence="1">Glutamyl-tRNA(Gln) amidotransferase subunit A, chloroplastic/mitochondrial</fullName>
        <shortName evidence="1">Glu-AdT subunit A</shortName>
        <ecNumber evidence="1">6.3.5.7</ecNumber>
    </recommendedName>
</protein>
<gene>
    <name evidence="1" type="primary">GATA</name>
    <name type="ordered locus">Os04g0643200</name>
    <name type="ordered locus">LOC_Os04g55050</name>
    <name type="ORF">OSJNBa0033G05.4</name>
    <name type="ORF">OSJNBa0063C18.18</name>
</gene>
<reference key="1">
    <citation type="journal article" date="2002" name="Nature">
        <title>Sequence and analysis of rice chromosome 4.</title>
        <authorList>
            <person name="Feng Q."/>
            <person name="Zhang Y."/>
            <person name="Hao P."/>
            <person name="Wang S."/>
            <person name="Fu G."/>
            <person name="Huang Y."/>
            <person name="Li Y."/>
            <person name="Zhu J."/>
            <person name="Liu Y."/>
            <person name="Hu X."/>
            <person name="Jia P."/>
            <person name="Zhang Y."/>
            <person name="Zhao Q."/>
            <person name="Ying K."/>
            <person name="Yu S."/>
            <person name="Tang Y."/>
            <person name="Weng Q."/>
            <person name="Zhang L."/>
            <person name="Lu Y."/>
            <person name="Mu J."/>
            <person name="Lu Y."/>
            <person name="Zhang L.S."/>
            <person name="Yu Z."/>
            <person name="Fan D."/>
            <person name="Liu X."/>
            <person name="Lu T."/>
            <person name="Li C."/>
            <person name="Wu Y."/>
            <person name="Sun T."/>
            <person name="Lei H."/>
            <person name="Li T."/>
            <person name="Hu H."/>
            <person name="Guan J."/>
            <person name="Wu M."/>
            <person name="Zhang R."/>
            <person name="Zhou B."/>
            <person name="Chen Z."/>
            <person name="Chen L."/>
            <person name="Jin Z."/>
            <person name="Wang R."/>
            <person name="Yin H."/>
            <person name="Cai Z."/>
            <person name="Ren S."/>
            <person name="Lv G."/>
            <person name="Gu W."/>
            <person name="Zhu G."/>
            <person name="Tu Y."/>
            <person name="Jia J."/>
            <person name="Zhang Y."/>
            <person name="Chen J."/>
            <person name="Kang H."/>
            <person name="Chen X."/>
            <person name="Shao C."/>
            <person name="Sun Y."/>
            <person name="Hu Q."/>
            <person name="Zhang X."/>
            <person name="Zhang W."/>
            <person name="Wang L."/>
            <person name="Ding C."/>
            <person name="Sheng H."/>
            <person name="Gu J."/>
            <person name="Chen S."/>
            <person name="Ni L."/>
            <person name="Zhu F."/>
            <person name="Chen W."/>
            <person name="Lan L."/>
            <person name="Lai Y."/>
            <person name="Cheng Z."/>
            <person name="Gu M."/>
            <person name="Jiang J."/>
            <person name="Li J."/>
            <person name="Hong G."/>
            <person name="Xue Y."/>
            <person name="Han B."/>
        </authorList>
    </citation>
    <scope>NUCLEOTIDE SEQUENCE [LARGE SCALE GENOMIC DNA]</scope>
    <source>
        <strain>cv. Nipponbare</strain>
    </source>
</reference>
<reference key="2">
    <citation type="journal article" date="2005" name="Nature">
        <title>The map-based sequence of the rice genome.</title>
        <authorList>
            <consortium name="International rice genome sequencing project (IRGSP)"/>
        </authorList>
    </citation>
    <scope>NUCLEOTIDE SEQUENCE [LARGE SCALE GENOMIC DNA]</scope>
    <source>
        <strain>cv. Nipponbare</strain>
    </source>
</reference>
<reference key="3">
    <citation type="journal article" date="2008" name="Nucleic Acids Res.">
        <title>The rice annotation project database (RAP-DB): 2008 update.</title>
        <authorList>
            <consortium name="The rice annotation project (RAP)"/>
        </authorList>
    </citation>
    <scope>GENOME REANNOTATION</scope>
    <source>
        <strain>cv. Nipponbare</strain>
    </source>
</reference>
<reference key="4">
    <citation type="journal article" date="2013" name="Rice">
        <title>Improvement of the Oryza sativa Nipponbare reference genome using next generation sequence and optical map data.</title>
        <authorList>
            <person name="Kawahara Y."/>
            <person name="de la Bastide M."/>
            <person name="Hamilton J.P."/>
            <person name="Kanamori H."/>
            <person name="McCombie W.R."/>
            <person name="Ouyang S."/>
            <person name="Schwartz D.C."/>
            <person name="Tanaka T."/>
            <person name="Wu J."/>
            <person name="Zhou S."/>
            <person name="Childs K.L."/>
            <person name="Davidson R.M."/>
            <person name="Lin H."/>
            <person name="Quesada-Ocampo L."/>
            <person name="Vaillancourt B."/>
            <person name="Sakai H."/>
            <person name="Lee S.S."/>
            <person name="Kim J."/>
            <person name="Numa H."/>
            <person name="Itoh T."/>
            <person name="Buell C.R."/>
            <person name="Matsumoto T."/>
        </authorList>
    </citation>
    <scope>GENOME REANNOTATION</scope>
    <source>
        <strain>cv. Nipponbare</strain>
    </source>
</reference>
<reference key="5">
    <citation type="journal article" date="2005" name="PLoS Biol.">
        <title>The genomes of Oryza sativa: a history of duplications.</title>
        <authorList>
            <person name="Yu J."/>
            <person name="Wang J."/>
            <person name="Lin W."/>
            <person name="Li S."/>
            <person name="Li H."/>
            <person name="Zhou J."/>
            <person name="Ni P."/>
            <person name="Dong W."/>
            <person name="Hu S."/>
            <person name="Zeng C."/>
            <person name="Zhang J."/>
            <person name="Zhang Y."/>
            <person name="Li R."/>
            <person name="Xu Z."/>
            <person name="Li S."/>
            <person name="Li X."/>
            <person name="Zheng H."/>
            <person name="Cong L."/>
            <person name="Lin L."/>
            <person name="Yin J."/>
            <person name="Geng J."/>
            <person name="Li G."/>
            <person name="Shi J."/>
            <person name="Liu J."/>
            <person name="Lv H."/>
            <person name="Li J."/>
            <person name="Wang J."/>
            <person name="Deng Y."/>
            <person name="Ran L."/>
            <person name="Shi X."/>
            <person name="Wang X."/>
            <person name="Wu Q."/>
            <person name="Li C."/>
            <person name="Ren X."/>
            <person name="Wang J."/>
            <person name="Wang X."/>
            <person name="Li D."/>
            <person name="Liu D."/>
            <person name="Zhang X."/>
            <person name="Ji Z."/>
            <person name="Zhao W."/>
            <person name="Sun Y."/>
            <person name="Zhang Z."/>
            <person name="Bao J."/>
            <person name="Han Y."/>
            <person name="Dong L."/>
            <person name="Ji J."/>
            <person name="Chen P."/>
            <person name="Wu S."/>
            <person name="Liu J."/>
            <person name="Xiao Y."/>
            <person name="Bu D."/>
            <person name="Tan J."/>
            <person name="Yang L."/>
            <person name="Ye C."/>
            <person name="Zhang J."/>
            <person name="Xu J."/>
            <person name="Zhou Y."/>
            <person name="Yu Y."/>
            <person name="Zhang B."/>
            <person name="Zhuang S."/>
            <person name="Wei H."/>
            <person name="Liu B."/>
            <person name="Lei M."/>
            <person name="Yu H."/>
            <person name="Li Y."/>
            <person name="Xu H."/>
            <person name="Wei S."/>
            <person name="He X."/>
            <person name="Fang L."/>
            <person name="Zhang Z."/>
            <person name="Zhang Y."/>
            <person name="Huang X."/>
            <person name="Su Z."/>
            <person name="Tong W."/>
            <person name="Li J."/>
            <person name="Tong Z."/>
            <person name="Li S."/>
            <person name="Ye J."/>
            <person name="Wang L."/>
            <person name="Fang L."/>
            <person name="Lei T."/>
            <person name="Chen C.-S."/>
            <person name="Chen H.-C."/>
            <person name="Xu Z."/>
            <person name="Li H."/>
            <person name="Huang H."/>
            <person name="Zhang F."/>
            <person name="Xu H."/>
            <person name="Li N."/>
            <person name="Zhao C."/>
            <person name="Li S."/>
            <person name="Dong L."/>
            <person name="Huang Y."/>
            <person name="Li L."/>
            <person name="Xi Y."/>
            <person name="Qi Q."/>
            <person name="Li W."/>
            <person name="Zhang B."/>
            <person name="Hu W."/>
            <person name="Zhang Y."/>
            <person name="Tian X."/>
            <person name="Jiao Y."/>
            <person name="Liang X."/>
            <person name="Jin J."/>
            <person name="Gao L."/>
            <person name="Zheng W."/>
            <person name="Hao B."/>
            <person name="Liu S.-M."/>
            <person name="Wang W."/>
            <person name="Yuan L."/>
            <person name="Cao M."/>
            <person name="McDermott J."/>
            <person name="Samudrala R."/>
            <person name="Wang J."/>
            <person name="Wong G.K.-S."/>
            <person name="Yang H."/>
        </authorList>
    </citation>
    <scope>NUCLEOTIDE SEQUENCE [LARGE SCALE GENOMIC DNA]</scope>
    <source>
        <strain>cv. Nipponbare</strain>
    </source>
</reference>
<proteinExistence type="inferred from homology"/>
<keyword id="KW-0067">ATP-binding</keyword>
<keyword id="KW-0150">Chloroplast</keyword>
<keyword id="KW-0436">Ligase</keyword>
<keyword id="KW-0496">Mitochondrion</keyword>
<keyword id="KW-0547">Nucleotide-binding</keyword>
<keyword id="KW-0934">Plastid</keyword>
<keyword id="KW-0648">Protein biosynthesis</keyword>
<keyword id="KW-1185">Reference proteome</keyword>